<comment type="function">
    <text>Core component of nucleosome. Nucleosomes wrap and compact DNA into chromatin, limiting DNA accessibility to the cellular machineries which require DNA as a template. Histones thereby play a central role in transcription regulation, DNA repair, DNA replication and chromosomal stability. DNA accessibility is regulated via a complex set of post-translational modifications of histones, also called histone code, and nucleosome remodeling.</text>
</comment>
<comment type="subunit">
    <text evidence="21 27">The nucleosome is a histone octamer containing two molecules each of H2A, H2B, H3 and H4 assembled in one H3-H4 heterotetramer and two H2A-H2B heterodimers (Probable). The octamer wraps approximately 147 bp of DNA (Probable). Found in a complex with PPAR9; DTX3L AND STAT1; the interaction is likely to induce DTX3L-mediated ubiquitination of H2BC9/H2BJ (PubMed:26479788).</text>
</comment>
<comment type="interaction">
    <interactant intactId="EBI-352469">
        <id>Q93079</id>
    </interactant>
    <interactant intactId="EBI-930964">
        <id>P54253</id>
        <label>ATXN1</label>
    </interactant>
    <organismsDiffer>false</organismsDiffer>
    <experiments>3</experiments>
</comment>
<comment type="interaction">
    <interactant intactId="EBI-352469">
        <id>Q93079</id>
    </interactant>
    <interactant intactId="EBI-466029">
        <id>P42858</id>
        <label>HTT</label>
    </interactant>
    <organismsDiffer>false</organismsDiffer>
    <experiments>18</experiments>
</comment>
<comment type="interaction">
    <interactant intactId="EBI-352469">
        <id>Q93079</id>
    </interactant>
    <interactant intactId="EBI-11952721">
        <id>Q05BL1</id>
        <label>TP53BP2</label>
    </interactant>
    <organismsDiffer>false</organismsDiffer>
    <experiments>3</experiments>
</comment>
<comment type="subcellular location">
    <subcellularLocation>
        <location>Nucleus</location>
    </subcellularLocation>
    <subcellularLocation>
        <location>Chromosome</location>
    </subcellularLocation>
</comment>
<comment type="PTM">
    <text evidence="15 21">Monoubiquitination at Lys-35 (H2BK34Ub) by the MSL1/MSL2 dimer is required for histone H3 'Lys-4' (H3K4me) and 'Lys-79' (H3K79me) methylation and transcription activation at specific gene loci, such as HOXA9 and MEIS1 loci. Similarly, monoubiquitination at Lys-121 (H2BK120Ub) by the RNF20/40 complex gives a specific tag for epigenetic transcriptional activation and is also prerequisite for histone H3 'Lys-4' and 'Lys-79' methylation. It also functions cooperatively with the FACT dimer to stimulate elongation by RNA polymerase II. H2BK120Ub also acts as a regulator of mRNA splicing: deubiquitination by USP49 is required for efficient cotranscriptional splicing of a large set of exons (PubMed:16627869). Monoubiquitinated by DTX3L upon encephalomyocarditis virus (EMCV)-mediated infection (PubMed:26479788).</text>
</comment>
<comment type="PTM">
    <text evidence="7 12">Phosphorylation at Ser-37 (H2BS36ph) by AMPK in response to stress promotes transcription (By similarity). Phosphorylated on Ser-15 (H2BS14ph) by STK4/MST1 during apoptosis; which facilitates apoptotic chromatin condensation (PubMed:12757711). Also phosphorylated on Ser-15 in response to DNA double strand breaks (DSBs), and in correlation with somatic hypermutation and immunoglobulin class-switch recombination.</text>
</comment>
<comment type="PTM">
    <text evidence="4">GlcNAcylation at Ser-113 promotes monoubiquitination of Lys-121. It fluctuates in response to extracellular glucose, and associates with transcribed genes (By similarity).</text>
</comment>
<comment type="PTM">
    <text evidence="9 26">ADP-ribosylated by PARP1 or PARP2 on Ser-7 (H2BS6ADPr) in response to DNA damage (PubMed:34874266). H2BS6ADPr promotes recruitment of CHD1L (PubMed:34874266). Poly ADP-ribosylation on Glu-36 (H2BE35ADPr) by PARP1 regulates adipogenesis: it inhibits phosphorylation at Ser-37 (H2BS36ph), thereby blocking expression of pro-adipogenetic genes (By similarity).</text>
</comment>
<comment type="PTM">
    <text evidence="18">Crotonylation (Kcr) is specifically present in male germ cells and marks testis-specific genes in post-meiotic cells, including X-linked genes that escape sex chromosome inactivation in haploid cells. Crotonylation marks active promoters and enhancers and confers resistance to transcriptional repressors. It is also associated with post-meiotically activated genes on autosomes.</text>
</comment>
<comment type="PTM">
    <text evidence="25">Lactylated in macrophages by EP300/P300 by using lactoyl-CoA directly derived from endogenous or exogenous lactate, leading to stimulates gene transcription.</text>
</comment>
<comment type="similarity">
    <text evidence="27">Belongs to the histone H2B family.</text>
</comment>
<accession>Q93079</accession>
<accession>B2R541</accession>
<accession>Q4VB74</accession>
<organism>
    <name type="scientific">Homo sapiens</name>
    <name type="common">Human</name>
    <dbReference type="NCBI Taxonomy" id="9606"/>
    <lineage>
        <taxon>Eukaryota</taxon>
        <taxon>Metazoa</taxon>
        <taxon>Chordata</taxon>
        <taxon>Craniata</taxon>
        <taxon>Vertebrata</taxon>
        <taxon>Euteleostomi</taxon>
        <taxon>Mammalia</taxon>
        <taxon>Eutheria</taxon>
        <taxon>Euarchontoglires</taxon>
        <taxon>Primates</taxon>
        <taxon>Haplorrhini</taxon>
        <taxon>Catarrhini</taxon>
        <taxon>Hominidae</taxon>
        <taxon>Homo</taxon>
    </lineage>
</organism>
<feature type="initiator methionine" description="Removed" evidence="1">
    <location>
        <position position="1"/>
    </location>
</feature>
<feature type="chain" id="PRO_0000071833" description="Histone H2B type 1-H">
    <location>
        <begin position="2"/>
        <end position="126"/>
    </location>
</feature>
<feature type="region of interest" description="Disordered" evidence="11">
    <location>
        <begin position="1"/>
        <end position="36"/>
    </location>
</feature>
<feature type="compositionally biased region" description="Low complexity" evidence="11">
    <location>
        <begin position="1"/>
        <end position="12"/>
    </location>
</feature>
<feature type="modified residue" description="N-acetylproline" evidence="1">
    <location>
        <position position="2"/>
    </location>
</feature>
<feature type="modified residue" description="N6-(2-hydroxyisobutyryl)lysine; alternate" evidence="20">
    <location>
        <position position="6"/>
    </location>
</feature>
<feature type="modified residue" description="N6-(beta-hydroxybutyryl)lysine; alternate" evidence="23">
    <location>
        <position position="6"/>
    </location>
</feature>
<feature type="modified residue" description="N6-acetyllysine; alternate" evidence="13 15">
    <location>
        <position position="6"/>
    </location>
</feature>
<feature type="modified residue" description="N6-butyryllysine; alternate" evidence="22">
    <location>
        <position position="6"/>
    </location>
</feature>
<feature type="modified residue" description="N6-crotonyllysine; alternate" evidence="18">
    <location>
        <position position="6"/>
    </location>
</feature>
<feature type="modified residue" description="N6-lactoyllysine; alternate" evidence="25">
    <location>
        <position position="6"/>
    </location>
</feature>
<feature type="modified residue" description="ADP-ribosylserine" evidence="26">
    <location>
        <position position="7"/>
    </location>
</feature>
<feature type="modified residue" description="N6-(beta-hydroxybutyryl)lysine; alternate" evidence="23">
    <location>
        <position position="12"/>
    </location>
</feature>
<feature type="modified residue" description="N6-acetyllysine; alternate" evidence="15">
    <location>
        <position position="12"/>
    </location>
</feature>
<feature type="modified residue" description="N6-crotonyllysine; alternate" evidence="18">
    <location>
        <position position="12"/>
    </location>
</feature>
<feature type="modified residue" description="N6-lactoyllysine; alternate" evidence="25">
    <location>
        <position position="12"/>
    </location>
</feature>
<feature type="modified residue" description="N6-(2-hydroxyisobutyryl)lysine; alternate" evidence="20">
    <location>
        <position position="13"/>
    </location>
</feature>
<feature type="modified residue" description="N6-acetyllysine; alternate" evidence="13 15">
    <location>
        <position position="13"/>
    </location>
</feature>
<feature type="modified residue" description="N6-crotonyllysine; alternate" evidence="18">
    <location>
        <position position="13"/>
    </location>
</feature>
<feature type="modified residue" description="Phosphoserine; by STK4/MST1" evidence="12">
    <location>
        <position position="15"/>
    </location>
</feature>
<feature type="modified residue" description="N6-acetyllysine; alternate" evidence="13 15">
    <location>
        <position position="16"/>
    </location>
</feature>
<feature type="modified residue" description="N6-crotonyllysine; alternate" evidence="18">
    <location>
        <position position="16"/>
    </location>
</feature>
<feature type="modified residue" description="N6-lactoyllysine; alternate" evidence="25">
    <location>
        <position position="16"/>
    </location>
</feature>
<feature type="modified residue" description="N6-(beta-hydroxybutyryl)lysine; alternate" evidence="23">
    <location>
        <position position="17"/>
    </location>
</feature>
<feature type="modified residue" description="N6-acetyllysine; alternate" evidence="15">
    <location>
        <position position="17"/>
    </location>
</feature>
<feature type="modified residue" description="N6-crotonyllysine; alternate" evidence="18">
    <location>
        <position position="17"/>
    </location>
</feature>
<feature type="modified residue" description="N6-glutaryllysine; alternate" evidence="24">
    <location>
        <position position="17"/>
    </location>
</feature>
<feature type="modified residue" description="N6-lactoyllysine; alternate" evidence="25">
    <location>
        <position position="17"/>
    </location>
</feature>
<feature type="modified residue" description="N6-(2-hydroxyisobutyryl)lysine; alternate" evidence="20">
    <location>
        <position position="21"/>
    </location>
</feature>
<feature type="modified residue" description="N6-(beta-hydroxybutyryl)lysine; alternate" evidence="23">
    <location>
        <position position="21"/>
    </location>
</feature>
<feature type="modified residue" description="N6-acetyllysine; alternate" evidence="13 15">
    <location>
        <position position="21"/>
    </location>
</feature>
<feature type="modified residue" description="N6-butyryllysine; alternate" evidence="22">
    <location>
        <position position="21"/>
    </location>
</feature>
<feature type="modified residue" description="N6-crotonyllysine; alternate" evidence="18">
    <location>
        <position position="21"/>
    </location>
</feature>
<feature type="modified residue" description="N6-lactoyllysine; alternate" evidence="25">
    <location>
        <position position="21"/>
    </location>
</feature>
<feature type="modified residue" description="N6-(2-hydroxyisobutyryl)lysine; alternate" evidence="20">
    <location>
        <position position="24"/>
    </location>
</feature>
<feature type="modified residue" description="N6-acetyllysine; alternate" evidence="2">
    <location>
        <position position="24"/>
    </location>
</feature>
<feature type="modified residue" description="N6-crotonyllysine; alternate" evidence="18">
    <location>
        <position position="24"/>
    </location>
</feature>
<feature type="modified residue" description="N6-lactoyllysine; alternate" evidence="25">
    <location>
        <position position="24"/>
    </location>
</feature>
<feature type="modified residue" description="N6-(2-hydroxyisobutyryl)lysine" evidence="20">
    <location>
        <position position="25"/>
    </location>
</feature>
<feature type="modified residue" description="N6-(2-hydroxyisobutyryl)lysine; alternate" evidence="20">
    <location>
        <position position="35"/>
    </location>
</feature>
<feature type="modified residue" description="N6-(beta-hydroxybutyryl)lysine; alternate" evidence="23">
    <location>
        <position position="35"/>
    </location>
</feature>
<feature type="modified residue" description="N6-crotonyllysine; alternate" evidence="18">
    <location>
        <position position="35"/>
    </location>
</feature>
<feature type="modified residue" description="N6-glutaryllysine; alternate" evidence="24">
    <location>
        <position position="35"/>
    </location>
</feature>
<feature type="modified residue" description="N6-succinyllysine; alternate" evidence="19">
    <location>
        <position position="35"/>
    </location>
</feature>
<feature type="modified residue" description="PolyADP-ribosyl glutamic acid" evidence="7">
    <location>
        <position position="36"/>
    </location>
</feature>
<feature type="modified residue" description="Phosphoserine; by AMPK" evidence="8">
    <location>
        <position position="37"/>
    </location>
</feature>
<feature type="modified residue" description="N6-(2-hydroxyisobutyryl)lysine; alternate" evidence="20">
    <location>
        <position position="44"/>
    </location>
</feature>
<feature type="modified residue" description="N6-glutaryllysine; alternate" evidence="24">
    <location>
        <position position="44"/>
    </location>
</feature>
<feature type="modified residue" description="N6-lactoyllysine; alternate" evidence="25">
    <location>
        <position position="44"/>
    </location>
</feature>
<feature type="modified residue" description="N6-(2-hydroxyisobutyryl)lysine; alternate" evidence="20">
    <location>
        <position position="47"/>
    </location>
</feature>
<feature type="modified residue" description="N6-glutaryllysine; alternate" evidence="24">
    <location>
        <position position="47"/>
    </location>
</feature>
<feature type="modified residue" description="N6-methyllysine; alternate" evidence="15">
    <location>
        <position position="47"/>
    </location>
</feature>
<feature type="modified residue" description="N6,N6-dimethyllysine; alternate" evidence="15">
    <location>
        <position position="58"/>
    </location>
</feature>
<feature type="modified residue" description="N6-(2-hydroxyisobutyryl)lysine; alternate" evidence="20">
    <location>
        <position position="58"/>
    </location>
</feature>
<feature type="modified residue" description="Dimethylated arginine" evidence="10">
    <location>
        <position position="80"/>
    </location>
</feature>
<feature type="modified residue" description="N6,N6,N6-trimethyllysine; alternate" evidence="10">
    <location>
        <position position="86"/>
    </location>
</feature>
<feature type="modified residue" description="N6-(2-hydroxyisobutyryl)lysine; alternate" evidence="20">
    <location>
        <position position="86"/>
    </location>
</feature>
<feature type="modified residue" description="N6-(beta-hydroxybutyryl)lysine; alternate" evidence="23">
    <location>
        <position position="86"/>
    </location>
</feature>
<feature type="modified residue" description="N6-acetyllysine; alternate" evidence="10">
    <location>
        <position position="86"/>
    </location>
</feature>
<feature type="modified residue" description="N6-lactoyllysine; alternate" evidence="25">
    <location>
        <position position="86"/>
    </location>
</feature>
<feature type="modified residue" description="Omega-N-methylarginine" evidence="10">
    <location>
        <position position="87"/>
    </location>
</feature>
<feature type="modified residue" description="Omega-N-methylarginine" evidence="10">
    <location>
        <position position="93"/>
    </location>
</feature>
<feature type="modified residue" description="N6-(2-hydroxyisobutyryl)lysine; alternate" evidence="20">
    <location>
        <position position="109"/>
    </location>
</feature>
<feature type="modified residue" description="N6-glutaryllysine; alternate" evidence="24">
    <location>
        <position position="109"/>
    </location>
</feature>
<feature type="modified residue" description="N6-lactoyllysine; alternate" evidence="25">
    <location>
        <position position="109"/>
    </location>
</feature>
<feature type="modified residue" description="N6-methyllysine; alternate" evidence="15">
    <location>
        <position position="109"/>
    </location>
</feature>
<feature type="modified residue" description="Phosphothreonine" evidence="5">
    <location>
        <position position="116"/>
    </location>
</feature>
<feature type="modified residue" description="N6-(2-hydroxyisobutyryl)lysine; alternate" evidence="20">
    <location>
        <position position="117"/>
    </location>
</feature>
<feature type="modified residue" description="N6-(beta-hydroxybutyryl)lysine; alternate" evidence="23">
    <location>
        <position position="117"/>
    </location>
</feature>
<feature type="modified residue" description="N6-glutaryllysine; alternate" evidence="24">
    <location>
        <position position="117"/>
    </location>
</feature>
<feature type="modified residue" description="N6-lactoyllysine; alternate" evidence="25">
    <location>
        <position position="117"/>
    </location>
</feature>
<feature type="modified residue" description="N6-malonyllysine; alternate" evidence="19">
    <location>
        <position position="117"/>
    </location>
</feature>
<feature type="modified residue" description="N6-methylated lysine; alternate" evidence="5">
    <location>
        <position position="117"/>
    </location>
</feature>
<feature type="modified residue" description="N6-succinyllysine; alternate" evidence="19">
    <location>
        <position position="117"/>
    </location>
</feature>
<feature type="modified residue" description="N6-(2-hydroxyisobutyryl)lysine; alternate" evidence="20">
    <location>
        <position position="121"/>
    </location>
</feature>
<feature type="modified residue" description="N6-(beta-hydroxybutyryl)lysine; alternate" evidence="23">
    <location>
        <position position="121"/>
    </location>
</feature>
<feature type="modified residue" description="N6-glutaryllysine; alternate" evidence="24">
    <location>
        <position position="121"/>
    </location>
</feature>
<feature type="modified residue" description="N6-lactoyllysine; alternate" evidence="25">
    <location>
        <position position="121"/>
    </location>
</feature>
<feature type="modified residue" description="N6-succinyllysine; alternate" evidence="19">
    <location>
        <position position="121"/>
    </location>
</feature>
<feature type="glycosylation site" description="O-linked (GlcNAc) serine" evidence="4">
    <location>
        <position position="113"/>
    </location>
</feature>
<feature type="cross-link" description="Glycyl lysine isopeptide (Lys-Gly) (interchain with G-Cter in SUMO2); alternate" evidence="3">
    <location>
        <position position="6"/>
    </location>
</feature>
<feature type="cross-link" description="Glycyl lysine isopeptide (Lys-Gly) (interchain with G-Cter in SUMO2); alternate" evidence="6">
    <location>
        <position position="21"/>
    </location>
</feature>
<feature type="cross-link" description="Glycyl lysine isopeptide (Lys-Gly) (interchain with G-Cter in ubiquitin); alternate" evidence="17">
    <location>
        <position position="35"/>
    </location>
</feature>
<feature type="cross-link" description="Glycyl lysine isopeptide (Lys-Gly) (interchain with G-Cter in ubiquitin); alternate" evidence="14 15 16">
    <location>
        <position position="121"/>
    </location>
</feature>
<feature type="helix" evidence="29">
    <location>
        <begin position="39"/>
        <end position="46"/>
    </location>
</feature>
<feature type="turn" evidence="29">
    <location>
        <begin position="47"/>
        <end position="49"/>
    </location>
</feature>
<feature type="helix" evidence="29">
    <location>
        <begin position="57"/>
        <end position="59"/>
    </location>
</feature>
<feature type="helix" evidence="29">
    <location>
        <begin position="61"/>
        <end position="84"/>
    </location>
</feature>
<feature type="strand" evidence="29">
    <location>
        <begin position="88"/>
        <end position="90"/>
    </location>
</feature>
<feature type="turn" evidence="29">
    <location>
        <begin position="92"/>
        <end position="96"/>
    </location>
</feature>
<feature type="helix" evidence="29">
    <location>
        <begin position="97"/>
        <end position="102"/>
    </location>
</feature>
<feature type="helix" evidence="29">
    <location>
        <begin position="107"/>
        <end position="116"/>
    </location>
</feature>
<feature type="helix" evidence="29">
    <location>
        <begin position="121"/>
        <end position="124"/>
    </location>
</feature>
<evidence type="ECO:0000250" key="1">
    <source>
        <dbReference type="UniProtKB" id="P23527"/>
    </source>
</evidence>
<evidence type="ECO:0000250" key="2">
    <source>
        <dbReference type="UniProtKB" id="P33778"/>
    </source>
</evidence>
<evidence type="ECO:0000250" key="3">
    <source>
        <dbReference type="UniProtKB" id="P58876"/>
    </source>
</evidence>
<evidence type="ECO:0000250" key="4">
    <source>
        <dbReference type="UniProtKB" id="P62807"/>
    </source>
</evidence>
<evidence type="ECO:0000250" key="5">
    <source>
        <dbReference type="UniProtKB" id="Q00729"/>
    </source>
</evidence>
<evidence type="ECO:0000250" key="6">
    <source>
        <dbReference type="UniProtKB" id="Q5QNW6"/>
    </source>
</evidence>
<evidence type="ECO:0000250" key="7">
    <source>
        <dbReference type="UniProtKB" id="Q64475"/>
    </source>
</evidence>
<evidence type="ECO:0000250" key="8">
    <source>
        <dbReference type="UniProtKB" id="Q64478"/>
    </source>
</evidence>
<evidence type="ECO:0000250" key="9">
    <source>
        <dbReference type="UniProtKB" id="Q6ZWY9"/>
    </source>
</evidence>
<evidence type="ECO:0000250" key="10">
    <source>
        <dbReference type="UniProtKB" id="Q96A08"/>
    </source>
</evidence>
<evidence type="ECO:0000256" key="11">
    <source>
        <dbReference type="SAM" id="MobiDB-lite"/>
    </source>
</evidence>
<evidence type="ECO:0000269" key="12">
    <source>
    </source>
</evidence>
<evidence type="ECO:0000269" key="13">
    <source>
    </source>
</evidence>
<evidence type="ECO:0000269" key="14">
    <source>
    </source>
</evidence>
<evidence type="ECO:0000269" key="15">
    <source>
    </source>
</evidence>
<evidence type="ECO:0000269" key="16">
    <source>
    </source>
</evidence>
<evidence type="ECO:0000269" key="17">
    <source>
    </source>
</evidence>
<evidence type="ECO:0000269" key="18">
    <source>
    </source>
</evidence>
<evidence type="ECO:0000269" key="19">
    <source>
    </source>
</evidence>
<evidence type="ECO:0000269" key="20">
    <source>
    </source>
</evidence>
<evidence type="ECO:0000269" key="21">
    <source>
    </source>
</evidence>
<evidence type="ECO:0000269" key="22">
    <source>
    </source>
</evidence>
<evidence type="ECO:0000269" key="23">
    <source>
    </source>
</evidence>
<evidence type="ECO:0000269" key="24">
    <source>
    </source>
</evidence>
<evidence type="ECO:0000269" key="25">
    <source>
    </source>
</evidence>
<evidence type="ECO:0000269" key="26">
    <source>
    </source>
</evidence>
<evidence type="ECO:0000305" key="27"/>
<evidence type="ECO:0000312" key="28">
    <source>
        <dbReference type="HGNC" id="HGNC:4755"/>
    </source>
</evidence>
<evidence type="ECO:0007829" key="29">
    <source>
        <dbReference type="PDB" id="8OL1"/>
    </source>
</evidence>
<keyword id="KW-0002">3D-structure</keyword>
<keyword id="KW-0007">Acetylation</keyword>
<keyword id="KW-0013">ADP-ribosylation</keyword>
<keyword id="KW-0158">Chromosome</keyword>
<keyword id="KW-0903">Direct protein sequencing</keyword>
<keyword id="KW-0238">DNA-binding</keyword>
<keyword id="KW-0325">Glycoprotein</keyword>
<keyword id="KW-0379">Hydroxylation</keyword>
<keyword id="KW-1017">Isopeptide bond</keyword>
<keyword id="KW-0488">Methylation</keyword>
<keyword id="KW-0544">Nucleosome core</keyword>
<keyword id="KW-0539">Nucleus</keyword>
<keyword id="KW-0597">Phosphoprotein</keyword>
<keyword id="KW-1185">Reference proteome</keyword>
<keyword id="KW-0832">Ubl conjugation</keyword>
<reference key="1">
    <citation type="journal article" date="1997" name="Genomics">
        <title>Human histone gene organization: nonregular arrangement within a large cluster.</title>
        <authorList>
            <person name="Albig W."/>
            <person name="Kioschis P."/>
            <person name="Poustka A."/>
            <person name="Meergans K."/>
            <person name="Doenecke D."/>
        </authorList>
    </citation>
    <scope>NUCLEOTIDE SEQUENCE [GENOMIC DNA]</scope>
</reference>
<reference key="2">
    <citation type="journal article" date="2002" name="Genomics">
        <title>The human and mouse replication-dependent histone genes.</title>
        <authorList>
            <person name="Marzluff W.F."/>
            <person name="Gongidi P."/>
            <person name="Woods K.R."/>
            <person name="Jin J."/>
            <person name="Maltais L.J."/>
        </authorList>
    </citation>
    <scope>NUCLEOTIDE SEQUENCE [GENOMIC DNA]</scope>
</reference>
<reference key="3">
    <citation type="journal article" date="2004" name="Nat. Genet.">
        <title>Complete sequencing and characterization of 21,243 full-length human cDNAs.</title>
        <authorList>
            <person name="Ota T."/>
            <person name="Suzuki Y."/>
            <person name="Nishikawa T."/>
            <person name="Otsuki T."/>
            <person name="Sugiyama T."/>
            <person name="Irie R."/>
            <person name="Wakamatsu A."/>
            <person name="Hayashi K."/>
            <person name="Sato H."/>
            <person name="Nagai K."/>
            <person name="Kimura K."/>
            <person name="Makita H."/>
            <person name="Sekine M."/>
            <person name="Obayashi M."/>
            <person name="Nishi T."/>
            <person name="Shibahara T."/>
            <person name="Tanaka T."/>
            <person name="Ishii S."/>
            <person name="Yamamoto J."/>
            <person name="Saito K."/>
            <person name="Kawai Y."/>
            <person name="Isono Y."/>
            <person name="Nakamura Y."/>
            <person name="Nagahari K."/>
            <person name="Murakami K."/>
            <person name="Yasuda T."/>
            <person name="Iwayanagi T."/>
            <person name="Wagatsuma M."/>
            <person name="Shiratori A."/>
            <person name="Sudo H."/>
            <person name="Hosoiri T."/>
            <person name="Kaku Y."/>
            <person name="Kodaira H."/>
            <person name="Kondo H."/>
            <person name="Sugawara M."/>
            <person name="Takahashi M."/>
            <person name="Kanda K."/>
            <person name="Yokoi T."/>
            <person name="Furuya T."/>
            <person name="Kikkawa E."/>
            <person name="Omura Y."/>
            <person name="Abe K."/>
            <person name="Kamihara K."/>
            <person name="Katsuta N."/>
            <person name="Sato K."/>
            <person name="Tanikawa M."/>
            <person name="Yamazaki M."/>
            <person name="Ninomiya K."/>
            <person name="Ishibashi T."/>
            <person name="Yamashita H."/>
            <person name="Murakawa K."/>
            <person name="Fujimori K."/>
            <person name="Tanai H."/>
            <person name="Kimata M."/>
            <person name="Watanabe M."/>
            <person name="Hiraoka S."/>
            <person name="Chiba Y."/>
            <person name="Ishida S."/>
            <person name="Ono Y."/>
            <person name="Takiguchi S."/>
            <person name="Watanabe S."/>
            <person name="Yosida M."/>
            <person name="Hotuta T."/>
            <person name="Kusano J."/>
            <person name="Kanehori K."/>
            <person name="Takahashi-Fujii A."/>
            <person name="Hara H."/>
            <person name="Tanase T.-O."/>
            <person name="Nomura Y."/>
            <person name="Togiya S."/>
            <person name="Komai F."/>
            <person name="Hara R."/>
            <person name="Takeuchi K."/>
            <person name="Arita M."/>
            <person name="Imose N."/>
            <person name="Musashino K."/>
            <person name="Yuuki H."/>
            <person name="Oshima A."/>
            <person name="Sasaki N."/>
            <person name="Aotsuka S."/>
            <person name="Yoshikawa Y."/>
            <person name="Matsunawa H."/>
            <person name="Ichihara T."/>
            <person name="Shiohata N."/>
            <person name="Sano S."/>
            <person name="Moriya S."/>
            <person name="Momiyama H."/>
            <person name="Satoh N."/>
            <person name="Takami S."/>
            <person name="Terashima Y."/>
            <person name="Suzuki O."/>
            <person name="Nakagawa S."/>
            <person name="Senoh A."/>
            <person name="Mizoguchi H."/>
            <person name="Goto Y."/>
            <person name="Shimizu F."/>
            <person name="Wakebe H."/>
            <person name="Hishigaki H."/>
            <person name="Watanabe T."/>
            <person name="Sugiyama A."/>
            <person name="Takemoto M."/>
            <person name="Kawakami B."/>
            <person name="Yamazaki M."/>
            <person name="Watanabe K."/>
            <person name="Kumagai A."/>
            <person name="Itakura S."/>
            <person name="Fukuzumi Y."/>
            <person name="Fujimori Y."/>
            <person name="Komiyama M."/>
            <person name="Tashiro H."/>
            <person name="Tanigami A."/>
            <person name="Fujiwara T."/>
            <person name="Ono T."/>
            <person name="Yamada K."/>
            <person name="Fujii Y."/>
            <person name="Ozaki K."/>
            <person name="Hirao M."/>
            <person name="Ohmori Y."/>
            <person name="Kawabata A."/>
            <person name="Hikiji T."/>
            <person name="Kobatake N."/>
            <person name="Inagaki H."/>
            <person name="Ikema Y."/>
            <person name="Okamoto S."/>
            <person name="Okitani R."/>
            <person name="Kawakami T."/>
            <person name="Noguchi S."/>
            <person name="Itoh T."/>
            <person name="Shigeta K."/>
            <person name="Senba T."/>
            <person name="Matsumura K."/>
            <person name="Nakajima Y."/>
            <person name="Mizuno T."/>
            <person name="Morinaga M."/>
            <person name="Sasaki M."/>
            <person name="Togashi T."/>
            <person name="Oyama M."/>
            <person name="Hata H."/>
            <person name="Watanabe M."/>
            <person name="Komatsu T."/>
            <person name="Mizushima-Sugano J."/>
            <person name="Satoh T."/>
            <person name="Shirai Y."/>
            <person name="Takahashi Y."/>
            <person name="Nakagawa K."/>
            <person name="Okumura K."/>
            <person name="Nagase T."/>
            <person name="Nomura N."/>
            <person name="Kikuchi H."/>
            <person name="Masuho Y."/>
            <person name="Yamashita R."/>
            <person name="Nakai K."/>
            <person name="Yada T."/>
            <person name="Nakamura Y."/>
            <person name="Ohara O."/>
            <person name="Isogai T."/>
            <person name="Sugano S."/>
        </authorList>
    </citation>
    <scope>NUCLEOTIDE SEQUENCE [LARGE SCALE MRNA]</scope>
    <source>
        <tissue>Thalamus</tissue>
    </source>
</reference>
<reference key="4">
    <citation type="journal article" date="2003" name="Nature">
        <title>The DNA sequence and analysis of human chromosome 6.</title>
        <authorList>
            <person name="Mungall A.J."/>
            <person name="Palmer S.A."/>
            <person name="Sims S.K."/>
            <person name="Edwards C.A."/>
            <person name="Ashurst J.L."/>
            <person name="Wilming L."/>
            <person name="Jones M.C."/>
            <person name="Horton R."/>
            <person name="Hunt S.E."/>
            <person name="Scott C.E."/>
            <person name="Gilbert J.G.R."/>
            <person name="Clamp M.E."/>
            <person name="Bethel G."/>
            <person name="Milne S."/>
            <person name="Ainscough R."/>
            <person name="Almeida J.P."/>
            <person name="Ambrose K.D."/>
            <person name="Andrews T.D."/>
            <person name="Ashwell R.I.S."/>
            <person name="Babbage A.K."/>
            <person name="Bagguley C.L."/>
            <person name="Bailey J."/>
            <person name="Banerjee R."/>
            <person name="Barker D.J."/>
            <person name="Barlow K.F."/>
            <person name="Bates K."/>
            <person name="Beare D.M."/>
            <person name="Beasley H."/>
            <person name="Beasley O."/>
            <person name="Bird C.P."/>
            <person name="Blakey S.E."/>
            <person name="Bray-Allen S."/>
            <person name="Brook J."/>
            <person name="Brown A.J."/>
            <person name="Brown J.Y."/>
            <person name="Burford D.C."/>
            <person name="Burrill W."/>
            <person name="Burton J."/>
            <person name="Carder C."/>
            <person name="Carter N.P."/>
            <person name="Chapman J.C."/>
            <person name="Clark S.Y."/>
            <person name="Clark G."/>
            <person name="Clee C.M."/>
            <person name="Clegg S."/>
            <person name="Cobley V."/>
            <person name="Collier R.E."/>
            <person name="Collins J.E."/>
            <person name="Colman L.K."/>
            <person name="Corby N.R."/>
            <person name="Coville G.J."/>
            <person name="Culley K.M."/>
            <person name="Dhami P."/>
            <person name="Davies J."/>
            <person name="Dunn M."/>
            <person name="Earthrowl M.E."/>
            <person name="Ellington A.E."/>
            <person name="Evans K.A."/>
            <person name="Faulkner L."/>
            <person name="Francis M.D."/>
            <person name="Frankish A."/>
            <person name="Frankland J."/>
            <person name="French L."/>
            <person name="Garner P."/>
            <person name="Garnett J."/>
            <person name="Ghori M.J."/>
            <person name="Gilby L.M."/>
            <person name="Gillson C.J."/>
            <person name="Glithero R.J."/>
            <person name="Grafham D.V."/>
            <person name="Grant M."/>
            <person name="Gribble S."/>
            <person name="Griffiths C."/>
            <person name="Griffiths M.N.D."/>
            <person name="Hall R."/>
            <person name="Halls K.S."/>
            <person name="Hammond S."/>
            <person name="Harley J.L."/>
            <person name="Hart E.A."/>
            <person name="Heath P.D."/>
            <person name="Heathcott R."/>
            <person name="Holmes S.J."/>
            <person name="Howden P.J."/>
            <person name="Howe K.L."/>
            <person name="Howell G.R."/>
            <person name="Huckle E."/>
            <person name="Humphray S.J."/>
            <person name="Humphries M.D."/>
            <person name="Hunt A.R."/>
            <person name="Johnson C.M."/>
            <person name="Joy A.A."/>
            <person name="Kay M."/>
            <person name="Keenan S.J."/>
            <person name="Kimberley A.M."/>
            <person name="King A."/>
            <person name="Laird G.K."/>
            <person name="Langford C."/>
            <person name="Lawlor S."/>
            <person name="Leongamornlert D.A."/>
            <person name="Leversha M."/>
            <person name="Lloyd C.R."/>
            <person name="Lloyd D.M."/>
            <person name="Loveland J.E."/>
            <person name="Lovell J."/>
            <person name="Martin S."/>
            <person name="Mashreghi-Mohammadi M."/>
            <person name="Maslen G.L."/>
            <person name="Matthews L."/>
            <person name="McCann O.T."/>
            <person name="McLaren S.J."/>
            <person name="McLay K."/>
            <person name="McMurray A."/>
            <person name="Moore M.J.F."/>
            <person name="Mullikin J.C."/>
            <person name="Niblett D."/>
            <person name="Nickerson T."/>
            <person name="Novik K.L."/>
            <person name="Oliver K."/>
            <person name="Overton-Larty E.K."/>
            <person name="Parker A."/>
            <person name="Patel R."/>
            <person name="Pearce A.V."/>
            <person name="Peck A.I."/>
            <person name="Phillimore B.J.C.T."/>
            <person name="Phillips S."/>
            <person name="Plumb R.W."/>
            <person name="Porter K.M."/>
            <person name="Ramsey Y."/>
            <person name="Ranby S.A."/>
            <person name="Rice C.M."/>
            <person name="Ross M.T."/>
            <person name="Searle S.M."/>
            <person name="Sehra H.K."/>
            <person name="Sheridan E."/>
            <person name="Skuce C.D."/>
            <person name="Smith S."/>
            <person name="Smith M."/>
            <person name="Spraggon L."/>
            <person name="Squares S.L."/>
            <person name="Steward C.A."/>
            <person name="Sycamore N."/>
            <person name="Tamlyn-Hall G."/>
            <person name="Tester J."/>
            <person name="Theaker A.J."/>
            <person name="Thomas D.W."/>
            <person name="Thorpe A."/>
            <person name="Tracey A."/>
            <person name="Tromans A."/>
            <person name="Tubby B."/>
            <person name="Wall M."/>
            <person name="Wallis J.M."/>
            <person name="West A.P."/>
            <person name="White S.S."/>
            <person name="Whitehead S.L."/>
            <person name="Whittaker H."/>
            <person name="Wild A."/>
            <person name="Willey D.J."/>
            <person name="Wilmer T.E."/>
            <person name="Wood J.M."/>
            <person name="Wray P.W."/>
            <person name="Wyatt J.C."/>
            <person name="Young L."/>
            <person name="Younger R.M."/>
            <person name="Bentley D.R."/>
            <person name="Coulson A."/>
            <person name="Durbin R.M."/>
            <person name="Hubbard T."/>
            <person name="Sulston J.E."/>
            <person name="Dunham I."/>
            <person name="Rogers J."/>
            <person name="Beck S."/>
        </authorList>
    </citation>
    <scope>NUCLEOTIDE SEQUENCE [LARGE SCALE GENOMIC DNA]</scope>
</reference>
<reference key="5">
    <citation type="submission" date="2005-07" db="EMBL/GenBank/DDBJ databases">
        <authorList>
            <person name="Mural R.J."/>
            <person name="Istrail S."/>
            <person name="Sutton G.G."/>
            <person name="Florea L."/>
            <person name="Halpern A.L."/>
            <person name="Mobarry C.M."/>
            <person name="Lippert R."/>
            <person name="Walenz B."/>
            <person name="Shatkay H."/>
            <person name="Dew I."/>
            <person name="Miller J.R."/>
            <person name="Flanigan M.J."/>
            <person name="Edwards N.J."/>
            <person name="Bolanos R."/>
            <person name="Fasulo D."/>
            <person name="Halldorsson B.V."/>
            <person name="Hannenhalli S."/>
            <person name="Turner R."/>
            <person name="Yooseph S."/>
            <person name="Lu F."/>
            <person name="Nusskern D.R."/>
            <person name="Shue B.C."/>
            <person name="Zheng X.H."/>
            <person name="Zhong F."/>
            <person name="Delcher A.L."/>
            <person name="Huson D.H."/>
            <person name="Kravitz S.A."/>
            <person name="Mouchard L."/>
            <person name="Reinert K."/>
            <person name="Remington K.A."/>
            <person name="Clark A.G."/>
            <person name="Waterman M.S."/>
            <person name="Eichler E.E."/>
            <person name="Adams M.D."/>
            <person name="Hunkapiller M.W."/>
            <person name="Myers E.W."/>
            <person name="Venter J.C."/>
        </authorList>
    </citation>
    <scope>NUCLEOTIDE SEQUENCE [LARGE SCALE GENOMIC DNA]</scope>
</reference>
<reference key="6">
    <citation type="journal article" date="2006" name="Mol. Cell. Proteomics">
        <title>Quantitative proteomic analysis of post-translational modifications of human histones.</title>
        <authorList>
            <person name="Beck H.C."/>
            <person name="Nielsen E.C."/>
            <person name="Matthiesen R."/>
            <person name="Jensen L.H."/>
            <person name="Sehested M."/>
            <person name="Finn P."/>
            <person name="Grauslund M."/>
            <person name="Hansen A.M."/>
            <person name="Jensen O.N."/>
        </authorList>
    </citation>
    <scope>PROTEIN SEQUENCE OF 7-24</scope>
    <scope>ACETYLATION AT LYS-6; LYS-12; LYS-13; LYS-16; LYS-17 AND LYS-21</scope>
    <scope>METHYLATION AT LYS-47; LYS-58 AND LYS-109</scope>
    <scope>UBIQUITINATION AT LYS-121</scope>
    <scope>IDENTIFICATION BY MASS SPECTROMETRY</scope>
</reference>
<reference key="7">
    <citation type="journal article" date="2003" name="Cell">
        <title>Apoptotic phosphorylation of histone H2B is mediated by mammalian sterile twenty kinase.</title>
        <authorList>
            <person name="Cheung W.L."/>
            <person name="Ajiro K."/>
            <person name="Samejima K."/>
            <person name="Kloc M."/>
            <person name="Cheung P."/>
            <person name="Mizzen C.A."/>
            <person name="Beeser A."/>
            <person name="Etkin L.D."/>
            <person name="Chernoff J."/>
            <person name="Earnshaw W.C."/>
            <person name="Allis C.D."/>
        </authorList>
    </citation>
    <scope>PHOSPHORYLATION AT SER-15</scope>
</reference>
<reference key="8">
    <citation type="journal article" date="2005" name="Mol. Cell">
        <title>Monoubiquitination of human histone H2B: the factors involved and their roles in HOX gene regulation.</title>
        <authorList>
            <person name="Zhu B."/>
            <person name="Zheng Y."/>
            <person name="Pham A.-D."/>
            <person name="Mandal S.S."/>
            <person name="Erdjument-Bromage H."/>
            <person name="Tempst P."/>
            <person name="Reinberg D."/>
        </authorList>
    </citation>
    <scope>UBIQUITINATION AT LYS-121</scope>
</reference>
<reference key="9">
    <citation type="journal article" date="2005" name="Mol. Cell. Biochem.">
        <title>Inhibition of core histones acetylation by carcinogenic nickel(II).</title>
        <authorList>
            <person name="Golebiowski F."/>
            <person name="Kasprzak K.S."/>
        </authorList>
    </citation>
    <scope>ACETYLATION AT LYS-6; LYS-13; LYS-16 AND LYS-21</scope>
</reference>
<reference key="10">
    <citation type="journal article" date="2006" name="Cell">
        <title>Histone H2B monoubiquitination functions cooperatively with FACT to regulate elongation by RNA polymerase II.</title>
        <authorList>
            <person name="Pavri R."/>
            <person name="Zhu B."/>
            <person name="Li G."/>
            <person name="Trojer P."/>
            <person name="Mandal S."/>
            <person name="Shilatifard A."/>
            <person name="Reinberg D."/>
        </authorList>
    </citation>
    <scope>UBIQUITINATION AT LYS-121</scope>
</reference>
<reference key="11">
    <citation type="journal article" date="2006" name="J. Proteome Res.">
        <title>Gene-specific characterization of human histone H2B by electron capture dissociation.</title>
        <authorList>
            <person name="Siuti N."/>
            <person name="Roth M.J."/>
            <person name="Mizzen C.A."/>
            <person name="Kelleher N.L."/>
            <person name="Pesavento J.J."/>
        </authorList>
    </citation>
    <scope>IDENTIFICATION BY MASS SPECTROMETRY</scope>
</reference>
<reference key="12">
    <citation type="journal article" date="2011" name="Cell">
        <title>Identification of 67 histone marks and histone lysine crotonylation as a new type of histone modification.</title>
        <authorList>
            <person name="Tan M."/>
            <person name="Luo H."/>
            <person name="Lee S."/>
            <person name="Jin F."/>
            <person name="Yang J.S."/>
            <person name="Montellier E."/>
            <person name="Buchou T."/>
            <person name="Cheng Z."/>
            <person name="Rousseaux S."/>
            <person name="Rajagopal N."/>
            <person name="Lu Z."/>
            <person name="Ye Z."/>
            <person name="Zhu Q."/>
            <person name="Wysocka J."/>
            <person name="Ye Y."/>
            <person name="Khochbin S."/>
            <person name="Ren B."/>
            <person name="Zhao Y."/>
        </authorList>
    </citation>
    <scope>CROTONYLATION AT LYS-6; LYS-12; LYS-13; LYS-16; LYS-17; LYS-21; LYS-24 AND LYS-35</scope>
</reference>
<reference key="13">
    <citation type="journal article" date="2011" name="Mol. Cell">
        <title>The RING finger protein MSL2 in the MOF complex is an E3 ubiquitin ligase for H2B K34 and is involved in crosstalk with H3 K4 and K79 methylation.</title>
        <authorList>
            <person name="Wu L."/>
            <person name="Zee B.M."/>
            <person name="Wang Y."/>
            <person name="Garcia B.A."/>
            <person name="Dou Y."/>
        </authorList>
    </citation>
    <scope>UBIQUITINATION AT LYS-35</scope>
</reference>
<reference key="14">
    <citation type="journal article" date="2012" name="Mol. Cell. Proteomics">
        <title>Lysine succinylation and lysine malonylation in histones.</title>
        <authorList>
            <person name="Xie Z."/>
            <person name="Dai J."/>
            <person name="Dai L."/>
            <person name="Tan M."/>
            <person name="Cheng Z."/>
            <person name="Wu Y."/>
            <person name="Boeke J.D."/>
            <person name="Zhao Y."/>
        </authorList>
    </citation>
    <scope>SUCCINYLATION AT LYS-35; LYS-117 AND LYS-121</scope>
    <scope>MALONYLATION AT LYS-117</scope>
</reference>
<reference key="15">
    <citation type="journal article" date="2013" name="Genes Dev.">
        <title>USP49 deubiquitinates histone H2B and regulates cotranscriptional pre-mRNA splicing.</title>
        <authorList>
            <person name="Zhang Z."/>
            <person name="Jones A."/>
            <person name="Joo H.Y."/>
            <person name="Zhou D."/>
            <person name="Cao Y."/>
            <person name="Chen S."/>
            <person name="Erdjument-Bromage H."/>
            <person name="Renfrow M."/>
            <person name="He H."/>
            <person name="Tempst P."/>
            <person name="Townes T.M."/>
            <person name="Giles K.E."/>
            <person name="Ma L."/>
            <person name="Wang H."/>
        </authorList>
    </citation>
    <scope>UBIQUITINATION</scope>
    <scope>DEUBIQUITINATION BY USP49</scope>
</reference>
<reference key="16">
    <citation type="journal article" date="2014" name="Nat. Chem. Biol.">
        <title>Lysine 2-hydroxyisobutyrylation is a widely distributed active histone mark.</title>
        <authorList>
            <person name="Dai L."/>
            <person name="Peng C."/>
            <person name="Montellier E."/>
            <person name="Lu Z."/>
            <person name="Chen Y."/>
            <person name="Ishii H."/>
            <person name="Debernardi A."/>
            <person name="Buchou T."/>
            <person name="Rousseaux S."/>
            <person name="Jin F."/>
            <person name="Sabari B.R."/>
            <person name="Deng Z."/>
            <person name="Allis C.D."/>
            <person name="Ren B."/>
            <person name="Khochbin S."/>
            <person name="Zhao Y."/>
        </authorList>
    </citation>
    <scope>HYDROXYBUTYRYLATION AT LYS-6; LYS-13; LYS-21; LYS-24; LYS-25; LYS-35; LYS-44; LYS-47; LYS-58; LYS-86; LYS-109; LYS-117 AND LYS-121</scope>
</reference>
<reference key="17">
    <citation type="journal article" date="2015" name="Nat. Immunol.">
        <title>PARP9-DTX3L ubiquitin ligase targets host histone H2BJ and viral 3C protease to enhance interferon signaling and control viral infection.</title>
        <authorList>
            <person name="Zhang Y."/>
            <person name="Mao D."/>
            <person name="Roswit W.T."/>
            <person name="Jin X."/>
            <person name="Patel A.C."/>
            <person name="Patel D.A."/>
            <person name="Agapov E."/>
            <person name="Wang Z."/>
            <person name="Tidwell R.M."/>
            <person name="Atkinson J.J."/>
            <person name="Huang G."/>
            <person name="McCarthy R."/>
            <person name="Yu J."/>
            <person name="Yun N.E."/>
            <person name="Paessler S."/>
            <person name="Lawson T.G."/>
            <person name="Omattage N.S."/>
            <person name="Brett T.J."/>
            <person name="Holtzman M.J."/>
        </authorList>
    </citation>
    <scope>IDENTIFICATION IN A COMPLEX WITH PPAR9; DTX3L AND STAT1</scope>
    <scope>UBIQUITINATION</scope>
</reference>
<reference key="18">
    <citation type="journal article" date="2016" name="Mol. Cell">
        <title>Dynamic competing histone H4 K5K8 acetylation and butyrylation are hallmarks of highly active gene promoters.</title>
        <authorList>
            <person name="Goudarzi A."/>
            <person name="Zhang D."/>
            <person name="Huang H."/>
            <person name="Barral S."/>
            <person name="Kwon O.K."/>
            <person name="Qi S."/>
            <person name="Tang Z."/>
            <person name="Buchou T."/>
            <person name="Vitte A.L."/>
            <person name="He T."/>
            <person name="Cheng Z."/>
            <person name="Montellier E."/>
            <person name="Gaucher J."/>
            <person name="Curtet S."/>
            <person name="Debernardi A."/>
            <person name="Charbonnier G."/>
            <person name="Puthier D."/>
            <person name="Petosa C."/>
            <person name="Panne D."/>
            <person name="Rousseaux S."/>
            <person name="Roeder R.G."/>
            <person name="Zhao Y."/>
            <person name="Khochbin S."/>
        </authorList>
    </citation>
    <scope>BUTYRYLATION AT LYS-6 AND LYS-21</scope>
</reference>
<reference key="19">
    <citation type="journal article" date="2016" name="Mol. Cell">
        <title>Metabolic regulation of gene expression by histone lysine beta-hydroxybutyrylation.</title>
        <authorList>
            <person name="Xie Z."/>
            <person name="Zhang D."/>
            <person name="Chung D."/>
            <person name="Tang Z."/>
            <person name="Huang H."/>
            <person name="Dai L."/>
            <person name="Qi S."/>
            <person name="Li J."/>
            <person name="Colak G."/>
            <person name="Chen Y."/>
            <person name="Xia C."/>
            <person name="Peng C."/>
            <person name="Ruan H."/>
            <person name="Kirkey M."/>
            <person name="Wang D."/>
            <person name="Jensen L.M."/>
            <person name="Kwon O.K."/>
            <person name="Lee S."/>
            <person name="Pletcher S.D."/>
            <person name="Tan M."/>
            <person name="Lombard D.B."/>
            <person name="White K.P."/>
            <person name="Zhao H."/>
            <person name="Li J."/>
            <person name="Roeder R.G."/>
            <person name="Yang X."/>
            <person name="Zhao Y."/>
        </authorList>
    </citation>
    <scope>HYDROXYBUTYRYLATION AT LYS-6; LYS-12; LYS-17; LYS-21; LYS-35; LYS-86; LYS-117 AND LYS-121</scope>
</reference>
<reference key="20">
    <citation type="journal article" date="2019" name="Mol. Cell">
        <title>Glutarylation of histone H4 lysine 91 regulates chromatin dynamics.</title>
        <authorList>
            <person name="Bao X."/>
            <person name="Liu Z."/>
            <person name="Zhang W."/>
            <person name="Gladysz K."/>
            <person name="Fung Y.M.E."/>
            <person name="Tian G."/>
            <person name="Xiong Y."/>
            <person name="Wong J.W.H."/>
            <person name="Yuen K.W.Y."/>
            <person name="Li X.D."/>
        </authorList>
    </citation>
    <scope>GLUTARYLATION AT LYS-17; LYS-35; LYS-44; LYS-47; LYS-109; LYS-117 AND LYS-121</scope>
</reference>
<reference key="21">
    <citation type="journal article" date="2019" name="Nature">
        <title>Metabolic regulation of gene expression by histone lactylation.</title>
        <authorList>
            <person name="Zhang D."/>
            <person name="Tang Z."/>
            <person name="Huang H."/>
            <person name="Zhou G."/>
            <person name="Cui C."/>
            <person name="Weng Y."/>
            <person name="Liu W."/>
            <person name="Kim S."/>
            <person name="Lee S."/>
            <person name="Perez-Neut M."/>
            <person name="Ding J."/>
            <person name="Czyz D."/>
            <person name="Hu R."/>
            <person name="Ye Z."/>
            <person name="He M."/>
            <person name="Zheng Y.G."/>
            <person name="Shuman H.A."/>
            <person name="Dai L."/>
            <person name="Ren B."/>
            <person name="Roeder R.G."/>
            <person name="Becker L."/>
            <person name="Zhao Y."/>
        </authorList>
    </citation>
    <scope>LACTYLATION AT LYS-6; LYS-12; LYS-16; LYS-17; LYS-21; LYS-24; LYS-44; LYS-86; LYS-109; LYS-117 AND LYS-121</scope>
</reference>
<reference key="22">
    <citation type="journal article" date="2021" name="Elife">
        <title>Serine ADP-ribosylation marks nucleosomes for ALC1-dependent chromatin remodeling.</title>
        <authorList>
            <person name="Mohapatra J."/>
            <person name="Tashiro K."/>
            <person name="Beckner R.L."/>
            <person name="Sierra J."/>
            <person name="Kilgore J.A."/>
            <person name="Williams N.S."/>
            <person name="Liszczak G."/>
        </authorList>
    </citation>
    <scope>ADP-RIBOSYLATION AT SER-7</scope>
</reference>
<proteinExistence type="evidence at protein level"/>
<name>H2B1H_HUMAN</name>
<sequence length="126" mass="13892">MPDPAKSAPAPKKGSKKAVTKAQKKDGKKRKRSRKESYSVYVYKVLKQVHPDTGISSKAMGIMNSFVNDIFERIAGEASRLAHYNKRSTITSREIQTAVRLLLPGELAKHAVSEGTKAVTKYTSSK</sequence>
<gene>
    <name evidence="28" type="primary">H2BC9</name>
    <name type="synonym">H2BFJ</name>
    <name evidence="28" type="synonym">HIST1H2BH</name>
</gene>
<protein>
    <recommendedName>
        <fullName>Histone H2B type 1-H</fullName>
    </recommendedName>
    <alternativeName>
        <fullName evidence="28">H2B-clustered histone 9</fullName>
    </alternativeName>
    <alternativeName>
        <fullName>Histone H2B.j</fullName>
        <shortName>H2B/j</shortName>
    </alternativeName>
</protein>
<dbReference type="EMBL" id="Z80781">
    <property type="protein sequence ID" value="CAB02543.1"/>
    <property type="molecule type" value="Genomic_DNA"/>
</dbReference>
<dbReference type="EMBL" id="AF531291">
    <property type="protein sequence ID" value="AAN06691.1"/>
    <property type="molecule type" value="Genomic_DNA"/>
</dbReference>
<dbReference type="EMBL" id="AK312052">
    <property type="protein sequence ID" value="BAG34988.1"/>
    <property type="molecule type" value="mRNA"/>
</dbReference>
<dbReference type="EMBL" id="AL031777">
    <property type="status" value="NOT_ANNOTATED_CDS"/>
    <property type="molecule type" value="Genomic_DNA"/>
</dbReference>
<dbReference type="EMBL" id="CH471087">
    <property type="protein sequence ID" value="EAW55552.1"/>
    <property type="molecule type" value="Genomic_DNA"/>
</dbReference>
<dbReference type="EMBL" id="BC096116">
    <property type="protein sequence ID" value="AAH96116.1"/>
    <property type="molecule type" value="mRNA"/>
</dbReference>
<dbReference type="EMBL" id="BC096117">
    <property type="protein sequence ID" value="AAH96117.1"/>
    <property type="molecule type" value="mRNA"/>
</dbReference>
<dbReference type="EMBL" id="BC096118">
    <property type="protein sequence ID" value="AAH96118.1"/>
    <property type="molecule type" value="mRNA"/>
</dbReference>
<dbReference type="EMBL" id="BC096119">
    <property type="protein sequence ID" value="AAH96119.1"/>
    <property type="molecule type" value="mRNA"/>
</dbReference>
<dbReference type="CCDS" id="CCDS4601.1"/>
<dbReference type="RefSeq" id="NP_003515.1">
    <property type="nucleotide sequence ID" value="NM_003524.3"/>
</dbReference>
<dbReference type="PDB" id="8OL1">
    <property type="method" value="EM"/>
    <property type="resolution" value="3.50 A"/>
    <property type="chains" value="D=31-125"/>
</dbReference>
<dbReference type="PDBsum" id="8OL1"/>
<dbReference type="EMDB" id="EMD-16936"/>
<dbReference type="SMR" id="Q93079"/>
<dbReference type="BioGRID" id="113941">
    <property type="interactions" value="451"/>
</dbReference>
<dbReference type="FunCoup" id="Q93079">
    <property type="interactions" value="995"/>
</dbReference>
<dbReference type="IntAct" id="Q93079">
    <property type="interactions" value="290"/>
</dbReference>
<dbReference type="STRING" id="9606.ENSP00000479169"/>
<dbReference type="GlyCosmos" id="Q93079">
    <property type="glycosylation" value="1 site, No reported glycans"/>
</dbReference>
<dbReference type="GlyGen" id="Q93079">
    <property type="glycosylation" value="2 sites, 1 O-linked glycan (1 site)"/>
</dbReference>
<dbReference type="iPTMnet" id="Q93079"/>
<dbReference type="PhosphoSitePlus" id="Q93079"/>
<dbReference type="SwissPalm" id="Q93079"/>
<dbReference type="BioMuta" id="HIST1H2BH"/>
<dbReference type="DMDM" id="7387739"/>
<dbReference type="jPOST" id="Q93079"/>
<dbReference type="MassIVE" id="Q93079"/>
<dbReference type="PaxDb" id="9606-ENSP00000479169"/>
<dbReference type="PeptideAtlas" id="Q93079"/>
<dbReference type="Pumba" id="Q93079"/>
<dbReference type="TopDownProteomics" id="Q93079"/>
<dbReference type="Antibodypedia" id="73045">
    <property type="antibodies" value="80 antibodies from 19 providers"/>
</dbReference>
<dbReference type="DNASU" id="8345"/>
<dbReference type="Ensembl" id="ENST00000619466.3">
    <property type="protein sequence ID" value="ENSP00000479169.1"/>
    <property type="gene ID" value="ENSG00000275713.3"/>
</dbReference>
<dbReference type="GeneID" id="8345"/>
<dbReference type="KEGG" id="hsa:8345"/>
<dbReference type="MANE-Select" id="ENST00000619466.3">
    <property type="protein sequence ID" value="ENSP00000479169.1"/>
    <property type="RefSeq nucleotide sequence ID" value="NM_003524.3"/>
    <property type="RefSeq protein sequence ID" value="NP_003515.1"/>
</dbReference>
<dbReference type="UCSC" id="uc003nhh.4">
    <property type="organism name" value="human"/>
</dbReference>
<dbReference type="AGR" id="HGNC:4755"/>
<dbReference type="CTD" id="8345"/>
<dbReference type="DisGeNET" id="8345"/>
<dbReference type="GeneCards" id="H2BC9"/>
<dbReference type="HGNC" id="HGNC:4755">
    <property type="gene designation" value="H2BC9"/>
</dbReference>
<dbReference type="HPA" id="ENSG00000275713">
    <property type="expression patterns" value="Tissue enhanced (bone marrow, lymphoid tissue)"/>
</dbReference>
<dbReference type="MIM" id="602806">
    <property type="type" value="gene"/>
</dbReference>
<dbReference type="neXtProt" id="NX_Q93079"/>
<dbReference type="OpenTargets" id="ENSG00000275713"/>
<dbReference type="VEuPathDB" id="HostDB:ENSG00000275713"/>
<dbReference type="eggNOG" id="KOG1744">
    <property type="taxonomic scope" value="Eukaryota"/>
</dbReference>
<dbReference type="GeneTree" id="ENSGT01110000267152"/>
<dbReference type="HOGENOM" id="CLU_075666_2_1_1"/>
<dbReference type="InParanoid" id="Q93079"/>
<dbReference type="OMA" id="KESYAVF"/>
<dbReference type="OrthoDB" id="9537006at2759"/>
<dbReference type="PAN-GO" id="Q93079">
    <property type="GO annotations" value="2 GO annotations based on evolutionary models"/>
</dbReference>
<dbReference type="PhylomeDB" id="Q93079"/>
<dbReference type="TreeFam" id="TF300212"/>
<dbReference type="PathwayCommons" id="Q93079"/>
<dbReference type="Reactome" id="R-HSA-110328">
    <property type="pathway name" value="Recognition and association of DNA glycosylase with site containing an affected pyrimidine"/>
</dbReference>
<dbReference type="Reactome" id="R-HSA-110329">
    <property type="pathway name" value="Cleavage of the damaged pyrimidine"/>
</dbReference>
<dbReference type="Reactome" id="R-HSA-110330">
    <property type="pathway name" value="Recognition and association of DNA glycosylase with site containing an affected purine"/>
</dbReference>
<dbReference type="Reactome" id="R-HSA-110331">
    <property type="pathway name" value="Cleavage of the damaged purine"/>
</dbReference>
<dbReference type="Reactome" id="R-HSA-1221632">
    <property type="pathway name" value="Meiotic synapsis"/>
</dbReference>
<dbReference type="Reactome" id="R-HSA-171306">
    <property type="pathway name" value="Packaging Of Telomere Ends"/>
</dbReference>
<dbReference type="Reactome" id="R-HSA-1912408">
    <property type="pathway name" value="Pre-NOTCH Transcription and Translation"/>
</dbReference>
<dbReference type="Reactome" id="R-HSA-201722">
    <property type="pathway name" value="Formation of the beta-catenin:TCF transactivating complex"/>
</dbReference>
<dbReference type="Reactome" id="R-HSA-212300">
    <property type="pathway name" value="PRC2 methylates histones and DNA"/>
</dbReference>
<dbReference type="Reactome" id="R-HSA-2299718">
    <property type="pathway name" value="Condensation of Prophase Chromosomes"/>
</dbReference>
<dbReference type="Reactome" id="R-HSA-2559580">
    <property type="pathway name" value="Oxidative Stress Induced Senescence"/>
</dbReference>
<dbReference type="Reactome" id="R-HSA-2559582">
    <property type="pathway name" value="Senescence-Associated Secretory Phenotype (SASP)"/>
</dbReference>
<dbReference type="Reactome" id="R-HSA-2559586">
    <property type="pathway name" value="DNA Damage/Telomere Stress Induced Senescence"/>
</dbReference>
<dbReference type="Reactome" id="R-HSA-3214815">
    <property type="pathway name" value="HDACs deacetylate histones"/>
</dbReference>
<dbReference type="Reactome" id="R-HSA-3214847">
    <property type="pathway name" value="HATs acetylate histones"/>
</dbReference>
<dbReference type="Reactome" id="R-HSA-427359">
    <property type="pathway name" value="SIRT1 negatively regulates rRNA expression"/>
</dbReference>
<dbReference type="Reactome" id="R-HSA-427389">
    <property type="pathway name" value="ERCC6 (CSB) and EHMT2 (G9a) positively regulate rRNA expression"/>
</dbReference>
<dbReference type="Reactome" id="R-HSA-427413">
    <property type="pathway name" value="NoRC negatively regulates rRNA expression"/>
</dbReference>
<dbReference type="Reactome" id="R-HSA-5250924">
    <property type="pathway name" value="B-WICH complex positively regulates rRNA expression"/>
</dbReference>
<dbReference type="Reactome" id="R-HSA-5334118">
    <property type="pathway name" value="DNA methylation"/>
</dbReference>
<dbReference type="Reactome" id="R-HSA-5578749">
    <property type="pathway name" value="Transcriptional regulation by small RNAs"/>
</dbReference>
<dbReference type="Reactome" id="R-HSA-5617472">
    <property type="pathway name" value="Activation of anterior HOX genes in hindbrain development during early embryogenesis"/>
</dbReference>
<dbReference type="Reactome" id="R-HSA-5625886">
    <property type="pathway name" value="Activated PKN1 stimulates transcription of AR (androgen receptor) regulated genes KLK2 and KLK3"/>
</dbReference>
<dbReference type="Reactome" id="R-HSA-5689880">
    <property type="pathway name" value="Ub-specific processing proteases"/>
</dbReference>
<dbReference type="Reactome" id="R-HSA-5693565">
    <property type="pathway name" value="Recruitment and ATM-mediated phosphorylation of repair and signaling proteins at DNA double strand breaks"/>
</dbReference>
<dbReference type="Reactome" id="R-HSA-5693571">
    <property type="pathway name" value="Nonhomologous End-Joining (NHEJ)"/>
</dbReference>
<dbReference type="Reactome" id="R-HSA-5693607">
    <property type="pathway name" value="Processing of DNA double-strand break ends"/>
</dbReference>
<dbReference type="Reactome" id="R-HSA-606279">
    <property type="pathway name" value="Deposition of new CENPA-containing nucleosomes at the centromere"/>
</dbReference>
<dbReference type="Reactome" id="R-HSA-68616">
    <property type="pathway name" value="Assembly of the ORC complex at the origin of replication"/>
</dbReference>
<dbReference type="Reactome" id="R-HSA-69473">
    <property type="pathway name" value="G2/M DNA damage checkpoint"/>
</dbReference>
<dbReference type="Reactome" id="R-HSA-73728">
    <property type="pathway name" value="RNA Polymerase I Promoter Opening"/>
</dbReference>
<dbReference type="Reactome" id="R-HSA-73772">
    <property type="pathway name" value="RNA Polymerase I Promoter Escape"/>
</dbReference>
<dbReference type="Reactome" id="R-HSA-8866654">
    <property type="pathway name" value="E3 ubiquitin ligases ubiquitinate target proteins"/>
</dbReference>
<dbReference type="Reactome" id="R-HSA-8936459">
    <property type="pathway name" value="RUNX1 regulates genes involved in megakaryocyte differentiation and platelet function"/>
</dbReference>
<dbReference type="Reactome" id="R-HSA-8939236">
    <property type="pathway name" value="RUNX1 regulates transcription of genes involved in differentiation of HSCs"/>
</dbReference>
<dbReference type="Reactome" id="R-HSA-9018519">
    <property type="pathway name" value="Estrogen-dependent gene expression"/>
</dbReference>
<dbReference type="Reactome" id="R-HSA-912446">
    <property type="pathway name" value="Meiotic recombination"/>
</dbReference>
<dbReference type="Reactome" id="R-HSA-9609690">
    <property type="pathway name" value="HCMV Early Events"/>
</dbReference>
<dbReference type="Reactome" id="R-HSA-9610379">
    <property type="pathway name" value="HCMV Late Events"/>
</dbReference>
<dbReference type="Reactome" id="R-HSA-9616222">
    <property type="pathway name" value="Transcriptional regulation of granulopoiesis"/>
</dbReference>
<dbReference type="Reactome" id="R-HSA-9670095">
    <property type="pathway name" value="Inhibition of DNA recombination at telomere"/>
</dbReference>
<dbReference type="Reactome" id="R-HSA-9710421">
    <property type="pathway name" value="Defective pyroptosis"/>
</dbReference>
<dbReference type="Reactome" id="R-HSA-977225">
    <property type="pathway name" value="Amyloid fiber formation"/>
</dbReference>
<dbReference type="Reactome" id="R-HSA-9821002">
    <property type="pathway name" value="Chromatin modifications during the maternal to zygotic transition (MZT)"/>
</dbReference>
<dbReference type="Reactome" id="R-HSA-9821993">
    <property type="pathway name" value="Replacement of protamines by nucleosomes in the male pronucleus"/>
</dbReference>
<dbReference type="Reactome" id="R-HSA-9841922">
    <property type="pathway name" value="MLL4 and MLL3 complexes regulate expression of PPARG target genes in adipogenesis and hepatic steatosis"/>
</dbReference>
<dbReference type="Reactome" id="R-HSA-9843940">
    <property type="pathway name" value="Regulation of endogenous retroelements by KRAB-ZFP proteins"/>
</dbReference>
<dbReference type="Reactome" id="R-HSA-9843970">
    <property type="pathway name" value="Regulation of endogenous retroelements by the Human Silencing Hub (HUSH) complex"/>
</dbReference>
<dbReference type="Reactome" id="R-HSA-9845323">
    <property type="pathway name" value="Regulation of endogenous retroelements by Piwi-interacting RNAs (piRNAs)"/>
</dbReference>
<dbReference type="SignaLink" id="Q93079"/>
<dbReference type="SIGNOR" id="Q93079"/>
<dbReference type="BioGRID-ORCS" id="8345">
    <property type="hits" value="377 hits in 1065 CRISPR screens"/>
</dbReference>
<dbReference type="ChiTaRS" id="HIST1H2BH">
    <property type="organism name" value="human"/>
</dbReference>
<dbReference type="GeneWiki" id="HIST1H2BH"/>
<dbReference type="GenomeRNAi" id="8345"/>
<dbReference type="Pharos" id="Q93079">
    <property type="development level" value="Tbio"/>
</dbReference>
<dbReference type="PRO" id="PR:Q93079"/>
<dbReference type="Proteomes" id="UP000005640">
    <property type="component" value="Chromosome 6"/>
</dbReference>
<dbReference type="RNAct" id="Q93079">
    <property type="molecule type" value="protein"/>
</dbReference>
<dbReference type="Bgee" id="ENSG00000275713">
    <property type="expression patterns" value="Expressed in bone marrow cell and 122 other cell types or tissues"/>
</dbReference>
<dbReference type="GO" id="GO:0005829">
    <property type="term" value="C:cytosol"/>
    <property type="evidence" value="ECO:0000314"/>
    <property type="project" value="HPA"/>
</dbReference>
<dbReference type="GO" id="GO:0070062">
    <property type="term" value="C:extracellular exosome"/>
    <property type="evidence" value="ECO:0007005"/>
    <property type="project" value="UniProtKB"/>
</dbReference>
<dbReference type="GO" id="GO:0005654">
    <property type="term" value="C:nucleoplasm"/>
    <property type="evidence" value="ECO:0000314"/>
    <property type="project" value="HPA"/>
</dbReference>
<dbReference type="GO" id="GO:0000786">
    <property type="term" value="C:nucleosome"/>
    <property type="evidence" value="ECO:0000303"/>
    <property type="project" value="UniProtKB"/>
</dbReference>
<dbReference type="GO" id="GO:0005634">
    <property type="term" value="C:nucleus"/>
    <property type="evidence" value="ECO:0000314"/>
    <property type="project" value="UniProtKB"/>
</dbReference>
<dbReference type="GO" id="GO:0032991">
    <property type="term" value="C:protein-containing complex"/>
    <property type="evidence" value="ECO:0000314"/>
    <property type="project" value="UniProtKB"/>
</dbReference>
<dbReference type="GO" id="GO:0003677">
    <property type="term" value="F:DNA binding"/>
    <property type="evidence" value="ECO:0000303"/>
    <property type="project" value="UniProtKB"/>
</dbReference>
<dbReference type="GO" id="GO:0019899">
    <property type="term" value="F:enzyme binding"/>
    <property type="evidence" value="ECO:0000353"/>
    <property type="project" value="UniProtKB"/>
</dbReference>
<dbReference type="GO" id="GO:0046982">
    <property type="term" value="F:protein heterodimerization activity"/>
    <property type="evidence" value="ECO:0007669"/>
    <property type="project" value="InterPro"/>
</dbReference>
<dbReference type="GO" id="GO:0097677">
    <property type="term" value="F:STAT family protein binding"/>
    <property type="evidence" value="ECO:0000353"/>
    <property type="project" value="UniProtKB"/>
</dbReference>
<dbReference type="GO" id="GO:0030527">
    <property type="term" value="F:structural constituent of chromatin"/>
    <property type="evidence" value="ECO:0007669"/>
    <property type="project" value="InterPro"/>
</dbReference>
<dbReference type="GO" id="GO:0044389">
    <property type="term" value="F:ubiquitin-like protein ligase binding"/>
    <property type="evidence" value="ECO:0000353"/>
    <property type="project" value="UniProtKB"/>
</dbReference>
<dbReference type="GO" id="GO:0006334">
    <property type="term" value="P:nucleosome assembly"/>
    <property type="evidence" value="ECO:0000303"/>
    <property type="project" value="UniProtKB"/>
</dbReference>
<dbReference type="CDD" id="cd22910">
    <property type="entry name" value="HFD_H2B"/>
    <property type="match status" value="1"/>
</dbReference>
<dbReference type="FunFam" id="1.10.20.10:FF:000003">
    <property type="entry name" value="Histone H2B"/>
    <property type="match status" value="1"/>
</dbReference>
<dbReference type="Gene3D" id="1.10.20.10">
    <property type="entry name" value="Histone, subunit A"/>
    <property type="match status" value="1"/>
</dbReference>
<dbReference type="InterPro" id="IPR009072">
    <property type="entry name" value="Histone-fold"/>
</dbReference>
<dbReference type="InterPro" id="IPR007125">
    <property type="entry name" value="Histone_H2A/H2B/H3"/>
</dbReference>
<dbReference type="InterPro" id="IPR000558">
    <property type="entry name" value="Histone_H2B"/>
</dbReference>
<dbReference type="InterPro" id="IPR055333">
    <property type="entry name" value="HISTONE_H2B_site"/>
</dbReference>
<dbReference type="PANTHER" id="PTHR23428">
    <property type="entry name" value="HISTONE H2B"/>
    <property type="match status" value="1"/>
</dbReference>
<dbReference type="Pfam" id="PF00125">
    <property type="entry name" value="Histone"/>
    <property type="match status" value="1"/>
</dbReference>
<dbReference type="PRINTS" id="PR00621">
    <property type="entry name" value="HISTONEH2B"/>
</dbReference>
<dbReference type="SMART" id="SM00427">
    <property type="entry name" value="H2B"/>
    <property type="match status" value="1"/>
</dbReference>
<dbReference type="SUPFAM" id="SSF47113">
    <property type="entry name" value="Histone-fold"/>
    <property type="match status" value="1"/>
</dbReference>
<dbReference type="PROSITE" id="PS00357">
    <property type="entry name" value="HISTONE_H2B"/>
    <property type="match status" value="1"/>
</dbReference>